<protein>
    <recommendedName>
        <fullName>Golgi to ER traffic protein 4</fullName>
    </recommendedName>
    <alternativeName>
        <fullName>Guided entry of tail-anchored proteins 4</fullName>
    </alternativeName>
</protein>
<accession>Q12125</accession>
<accession>D6W2M2</accession>
<proteinExistence type="evidence at protein level"/>
<comment type="function">
    <text evidence="3">May play a role in insertion of tail-anchored proteins into the endoplasmic reticulum membrane.</text>
</comment>
<comment type="subunit">
    <text evidence="4">Interacts with MDY2/GET5.</text>
</comment>
<comment type="interaction">
    <interactant intactId="EBI-36940">
        <id>Q12125</id>
    </interactant>
    <interactant intactId="EBI-2989">
        <id>Q12154</id>
        <label>GET3</label>
    </interactant>
    <organismsDiffer>false</organismsDiffer>
    <experiments>11</experiments>
</comment>
<comment type="interaction">
    <interactant intactId="EBI-36940">
        <id>Q12125</id>
    </interactant>
    <interactant intactId="EBI-34904">
        <id>Q12285</id>
        <label>MDY2</label>
    </interactant>
    <organismsDiffer>false</organismsDiffer>
    <experiments>18</experiments>
</comment>
<comment type="interaction">
    <interactant intactId="EBI-36940">
        <id>Q12125</id>
    </interactant>
    <interactant intactId="EBI-16577">
        <id>P22214</id>
        <label>SEC22</label>
    </interactant>
    <organismsDiffer>false</organismsDiffer>
    <experiments>2</experiments>
</comment>
<comment type="interaction">
    <interactant intactId="EBI-36940">
        <id>Q12125</id>
    </interactant>
    <interactant intactId="EBI-31784">
        <id>Q12118</id>
        <label>SGT2</label>
    </interactant>
    <organismsDiffer>false</organismsDiffer>
    <experiments>6</experiments>
</comment>
<comment type="subcellular location">
    <subcellularLocation>
        <location evidence="1">Cytoplasm</location>
    </subcellularLocation>
</comment>
<comment type="miscellaneous">
    <text evidence="2">Present with 5350 molecules/cell in log phase SD medium.</text>
</comment>
<comment type="similarity">
    <text evidence="5">Belongs to the GET4 family.</text>
</comment>
<evidence type="ECO:0000269" key="1">
    <source>
    </source>
</evidence>
<evidence type="ECO:0000269" key="2">
    <source>
    </source>
</evidence>
<evidence type="ECO:0000269" key="3">
    <source>
    </source>
</evidence>
<evidence type="ECO:0000269" key="4">
    <source>
    </source>
</evidence>
<evidence type="ECO:0000305" key="5"/>
<evidence type="ECO:0007829" key="6">
    <source>
        <dbReference type="PDB" id="2WPV"/>
    </source>
</evidence>
<keyword id="KW-0002">3D-structure</keyword>
<keyword id="KW-0963">Cytoplasm</keyword>
<keyword id="KW-0931">ER-Golgi transport</keyword>
<keyword id="KW-1185">Reference proteome</keyword>
<keyword id="KW-0813">Transport</keyword>
<organism>
    <name type="scientific">Saccharomyces cerevisiae (strain ATCC 204508 / S288c)</name>
    <name type="common">Baker's yeast</name>
    <dbReference type="NCBI Taxonomy" id="559292"/>
    <lineage>
        <taxon>Eukaryota</taxon>
        <taxon>Fungi</taxon>
        <taxon>Dikarya</taxon>
        <taxon>Ascomycota</taxon>
        <taxon>Saccharomycotina</taxon>
        <taxon>Saccharomycetes</taxon>
        <taxon>Saccharomycetales</taxon>
        <taxon>Saccharomycetaceae</taxon>
        <taxon>Saccharomyces</taxon>
    </lineage>
</organism>
<reference key="1">
    <citation type="journal article" date="1996" name="Yeast">
        <title>Analysis of a 22,956 bp region on the right arm of Saccharomyces cerevisiae chromosome XV.</title>
        <authorList>
            <person name="Madania A."/>
            <person name="Poch O."/>
            <person name="Tarassov I.A."/>
            <person name="Winsor B."/>
            <person name="Martin R.P."/>
        </authorList>
    </citation>
    <scope>NUCLEOTIDE SEQUENCE [GENOMIC DNA]</scope>
    <source>
        <strain>S288c / FY1678</strain>
    </source>
</reference>
<reference key="2">
    <citation type="journal article" date="1997" name="Nature">
        <title>The nucleotide sequence of Saccharomyces cerevisiae chromosome XV.</title>
        <authorList>
            <person name="Dujon B."/>
            <person name="Albermann K."/>
            <person name="Aldea M."/>
            <person name="Alexandraki D."/>
            <person name="Ansorge W."/>
            <person name="Arino J."/>
            <person name="Benes V."/>
            <person name="Bohn C."/>
            <person name="Bolotin-Fukuhara M."/>
            <person name="Bordonne R."/>
            <person name="Boyer J."/>
            <person name="Camasses A."/>
            <person name="Casamayor A."/>
            <person name="Casas C."/>
            <person name="Cheret G."/>
            <person name="Cziepluch C."/>
            <person name="Daignan-Fornier B."/>
            <person name="Dang V.-D."/>
            <person name="de Haan M."/>
            <person name="Delius H."/>
            <person name="Durand P."/>
            <person name="Fairhead C."/>
            <person name="Feldmann H."/>
            <person name="Gaillon L."/>
            <person name="Galisson F."/>
            <person name="Gamo F.-J."/>
            <person name="Gancedo C."/>
            <person name="Goffeau A."/>
            <person name="Goulding S.E."/>
            <person name="Grivell L.A."/>
            <person name="Habbig B."/>
            <person name="Hand N.J."/>
            <person name="Hani J."/>
            <person name="Hattenhorst U."/>
            <person name="Hebling U."/>
            <person name="Hernando Y."/>
            <person name="Herrero E."/>
            <person name="Heumann K."/>
            <person name="Hiesel R."/>
            <person name="Hilger F."/>
            <person name="Hofmann B."/>
            <person name="Hollenberg C.P."/>
            <person name="Hughes B."/>
            <person name="Jauniaux J.-C."/>
            <person name="Kalogeropoulos A."/>
            <person name="Katsoulou C."/>
            <person name="Kordes E."/>
            <person name="Lafuente M.J."/>
            <person name="Landt O."/>
            <person name="Louis E.J."/>
            <person name="Maarse A.C."/>
            <person name="Madania A."/>
            <person name="Mannhaupt G."/>
            <person name="Marck C."/>
            <person name="Martin R.P."/>
            <person name="Mewes H.-W."/>
            <person name="Michaux G."/>
            <person name="Paces V."/>
            <person name="Parle-McDermott A.G."/>
            <person name="Pearson B.M."/>
            <person name="Perrin A."/>
            <person name="Pettersson B."/>
            <person name="Poch O."/>
            <person name="Pohl T.M."/>
            <person name="Poirey R."/>
            <person name="Portetelle D."/>
            <person name="Pujol A."/>
            <person name="Purnelle B."/>
            <person name="Ramezani Rad M."/>
            <person name="Rechmann S."/>
            <person name="Schwager C."/>
            <person name="Schweizer M."/>
            <person name="Sor F."/>
            <person name="Sterky F."/>
            <person name="Tarassov I.A."/>
            <person name="Teodoru C."/>
            <person name="Tettelin H."/>
            <person name="Thierry A."/>
            <person name="Tobiasch E."/>
            <person name="Tzermia M."/>
            <person name="Uhlen M."/>
            <person name="Unseld M."/>
            <person name="Valens M."/>
            <person name="Vandenbol M."/>
            <person name="Vetter I."/>
            <person name="Vlcek C."/>
            <person name="Voet M."/>
            <person name="Volckaert G."/>
            <person name="Voss H."/>
            <person name="Wambutt R."/>
            <person name="Wedler H."/>
            <person name="Wiemann S."/>
            <person name="Winsor B."/>
            <person name="Wolfe K.H."/>
            <person name="Zollner A."/>
            <person name="Zumstein E."/>
            <person name="Kleine K."/>
        </authorList>
    </citation>
    <scope>NUCLEOTIDE SEQUENCE [LARGE SCALE GENOMIC DNA]</scope>
    <source>
        <strain>ATCC 204508 / S288c</strain>
    </source>
</reference>
<reference key="3">
    <citation type="journal article" date="2014" name="G3 (Bethesda)">
        <title>The reference genome sequence of Saccharomyces cerevisiae: Then and now.</title>
        <authorList>
            <person name="Engel S.R."/>
            <person name="Dietrich F.S."/>
            <person name="Fisk D.G."/>
            <person name="Binkley G."/>
            <person name="Balakrishnan R."/>
            <person name="Costanzo M.C."/>
            <person name="Dwight S.S."/>
            <person name="Hitz B.C."/>
            <person name="Karra K."/>
            <person name="Nash R.S."/>
            <person name="Weng S."/>
            <person name="Wong E.D."/>
            <person name="Lloyd P."/>
            <person name="Skrzypek M.S."/>
            <person name="Miyasato S.R."/>
            <person name="Simison M."/>
            <person name="Cherry J.M."/>
        </authorList>
    </citation>
    <scope>GENOME REANNOTATION</scope>
    <source>
        <strain>ATCC 204508 / S288c</strain>
    </source>
</reference>
<reference key="4">
    <citation type="journal article" date="2007" name="Genome Res.">
        <title>Approaching a complete repository of sequence-verified protein-encoding clones for Saccharomyces cerevisiae.</title>
        <authorList>
            <person name="Hu Y."/>
            <person name="Rolfs A."/>
            <person name="Bhullar B."/>
            <person name="Murthy T.V.S."/>
            <person name="Zhu C."/>
            <person name="Berger M.F."/>
            <person name="Camargo A.A."/>
            <person name="Kelley F."/>
            <person name="McCarron S."/>
            <person name="Jepson D."/>
            <person name="Richardson A."/>
            <person name="Raphael J."/>
            <person name="Moreira D."/>
            <person name="Taycher E."/>
            <person name="Zuo D."/>
            <person name="Mohr S."/>
            <person name="Kane M.F."/>
            <person name="Williamson J."/>
            <person name="Simpson A.J.G."/>
            <person name="Bulyk M.L."/>
            <person name="Harlow E."/>
            <person name="Marsischky G."/>
            <person name="Kolodner R.D."/>
            <person name="LaBaer J."/>
        </authorList>
    </citation>
    <scope>NUCLEOTIDE SEQUENCE [GENOMIC DNA]</scope>
    <source>
        <strain>ATCC 204508 / S288c</strain>
    </source>
</reference>
<reference key="5">
    <citation type="journal article" date="2003" name="Nature">
        <title>Global analysis of protein localization in budding yeast.</title>
        <authorList>
            <person name="Huh W.-K."/>
            <person name="Falvo J.V."/>
            <person name="Gerke L.C."/>
            <person name="Carroll A.S."/>
            <person name="Howson R.W."/>
            <person name="Weissman J.S."/>
            <person name="O'Shea E.K."/>
        </authorList>
    </citation>
    <scope>SUBCELLULAR LOCATION [LARGE SCALE ANALYSIS]</scope>
</reference>
<reference key="6">
    <citation type="journal article" date="2003" name="Nature">
        <title>Global analysis of protein expression in yeast.</title>
        <authorList>
            <person name="Ghaemmaghami S."/>
            <person name="Huh W.-K."/>
            <person name="Bower K."/>
            <person name="Howson R.W."/>
            <person name="Belle A."/>
            <person name="Dephoure N."/>
            <person name="O'Shea E.K."/>
            <person name="Weissman J.S."/>
        </authorList>
    </citation>
    <scope>LEVEL OF PROTEIN EXPRESSION [LARGE SCALE ANALYSIS]</scope>
</reference>
<reference key="7">
    <citation type="journal article" date="2009" name="Science">
        <title>Comprehensive characterization of genes required for protein folding in the endoplasmic reticulum.</title>
        <authorList>
            <person name="Jonikas M.C."/>
            <person name="Collins S.R."/>
            <person name="Denic V."/>
            <person name="Oh E."/>
            <person name="Quan E.M."/>
            <person name="Schmid V."/>
            <person name="Weibezahn J."/>
            <person name="Schwappach B."/>
            <person name="Walter P."/>
            <person name="Weissman J.S."/>
            <person name="Schuldiner M."/>
        </authorList>
    </citation>
    <scope>FUNCTION</scope>
</reference>
<reference key="8">
    <citation type="journal article" date="2012" name="Proc. Natl. Acad. Sci. U.S.A.">
        <title>N-terminal acetylome analyses and functional insights of the N-terminal acetyltransferase NatB.</title>
        <authorList>
            <person name="Van Damme P."/>
            <person name="Lasa M."/>
            <person name="Polevoda B."/>
            <person name="Gazquez C."/>
            <person name="Elosegui-Artola A."/>
            <person name="Kim D.S."/>
            <person name="De Juan-Pardo E."/>
            <person name="Demeyer K."/>
            <person name="Hole K."/>
            <person name="Larrea E."/>
            <person name="Timmerman E."/>
            <person name="Prieto J."/>
            <person name="Arnesen T."/>
            <person name="Sherman F."/>
            <person name="Gevaert K."/>
            <person name="Aldabe R."/>
        </authorList>
    </citation>
    <scope>IDENTIFICATION BY MASS SPECTROMETRY [LARGE SCALE ANALYSIS]</scope>
</reference>
<reference key="9">
    <citation type="journal article" date="2010" name="J. Biol. Chem.">
        <title>Crystal structure of Get4-Get5 complex and its interactions with Sgt2, Get3, and Ydj1.</title>
        <authorList>
            <person name="Chang Y.W."/>
            <person name="Chuang Y.C."/>
            <person name="Ho Y.C."/>
            <person name="Cheng M.Y."/>
            <person name="Sun Y.J."/>
            <person name="Hsiao C.D."/>
            <person name="Wang C."/>
        </authorList>
    </citation>
    <scope>X-RAY CRYSTALLOGRAPHY (1.99 ANGSTROMS) IN COMPLEX WITH MDY2</scope>
</reference>
<feature type="chain" id="PRO_0000228107" description="Golgi to ER traffic protein 4">
    <location>
        <begin position="1"/>
        <end position="312"/>
    </location>
</feature>
<feature type="helix" evidence="6">
    <location>
        <begin position="13"/>
        <end position="26"/>
    </location>
</feature>
<feature type="helix" evidence="6">
    <location>
        <begin position="29"/>
        <end position="45"/>
    </location>
</feature>
<feature type="helix" evidence="6">
    <location>
        <begin position="49"/>
        <end position="65"/>
    </location>
</feature>
<feature type="helix" evidence="6">
    <location>
        <begin position="69"/>
        <end position="85"/>
    </location>
</feature>
<feature type="helix" evidence="6">
    <location>
        <begin position="92"/>
        <end position="102"/>
    </location>
</feature>
<feature type="helix" evidence="6">
    <location>
        <begin position="112"/>
        <end position="125"/>
    </location>
</feature>
<feature type="helix" evidence="6">
    <location>
        <begin position="134"/>
        <end position="146"/>
    </location>
</feature>
<feature type="helix" evidence="6">
    <location>
        <begin position="150"/>
        <end position="158"/>
    </location>
</feature>
<feature type="helix" evidence="6">
    <location>
        <begin position="162"/>
        <end position="178"/>
    </location>
</feature>
<feature type="helix" evidence="6">
    <location>
        <begin position="184"/>
        <end position="200"/>
    </location>
</feature>
<feature type="helix" evidence="6">
    <location>
        <begin position="204"/>
        <end position="222"/>
    </location>
</feature>
<feature type="strand" evidence="6">
    <location>
        <begin position="226"/>
        <end position="231"/>
    </location>
</feature>
<feature type="strand" evidence="6">
    <location>
        <begin position="234"/>
        <end position="241"/>
    </location>
</feature>
<feature type="helix" evidence="6">
    <location>
        <begin position="243"/>
        <end position="257"/>
    </location>
</feature>
<feature type="helix" evidence="6">
    <location>
        <begin position="260"/>
        <end position="269"/>
    </location>
</feature>
<feature type="helix" evidence="6">
    <location>
        <begin position="271"/>
        <end position="276"/>
    </location>
</feature>
<feature type="helix" evidence="6">
    <location>
        <begin position="278"/>
        <end position="289"/>
    </location>
</feature>
<sequence>MVPAESNAVQAKLAKTLQRFENKIKAGDYYEAHQTLRTIANRYVRSKSYEHAIELISQGALSFLKAKQGGSGTDLIFYLLEVYDLAEVKVDDISVARLVRLIAELDPSEPNLKDVITGMNNWSIKFSEYKFGDPYLHNTIGSKLLEGDFVYEAERYFMLGTHDSMIKYVDLLWDWLCQVDDIEDSTVAEFFSRLVFNYLFISNISFAHESKDIFLERFIEKFHPKYEKIDKNGYEIVFFEDYSDLNFLQLLLITCQTKDKSYFLNLKNHYLDFSQAYKSELEFLGQEYFNIVAPKQTNFLQDMMSGFLGGSK</sequence>
<name>GET4_YEAST</name>
<gene>
    <name type="primary">GET4</name>
    <name type="ordered locus">YOR164C</name>
    <name type="ORF">O3580</name>
</gene>
<dbReference type="EMBL" id="U55021">
    <property type="protein sequence ID" value="AAB47411.1"/>
    <property type="molecule type" value="Genomic_DNA"/>
</dbReference>
<dbReference type="EMBL" id="Z75072">
    <property type="protein sequence ID" value="CAA99370.1"/>
    <property type="molecule type" value="Genomic_DNA"/>
</dbReference>
<dbReference type="EMBL" id="AY558036">
    <property type="protein sequence ID" value="AAS56362.1"/>
    <property type="molecule type" value="Genomic_DNA"/>
</dbReference>
<dbReference type="EMBL" id="BK006948">
    <property type="protein sequence ID" value="DAA10938.1"/>
    <property type="molecule type" value="Genomic_DNA"/>
</dbReference>
<dbReference type="PIR" id="S67052">
    <property type="entry name" value="S67052"/>
</dbReference>
<dbReference type="RefSeq" id="NP_014807.3">
    <property type="nucleotide sequence ID" value="NM_001183583.3"/>
</dbReference>
<dbReference type="PDB" id="2WPV">
    <property type="method" value="X-ray"/>
    <property type="resolution" value="1.99 A"/>
    <property type="chains" value="A/C/E/G=1-312"/>
</dbReference>
<dbReference type="PDB" id="3LKU">
    <property type="method" value="X-ray"/>
    <property type="resolution" value="2.80 A"/>
    <property type="chains" value="A/C/E=11-300"/>
</dbReference>
<dbReference type="PDB" id="4PWX">
    <property type="method" value="X-ray"/>
    <property type="resolution" value="5.40 A"/>
    <property type="chains" value="C/E=11-290"/>
</dbReference>
<dbReference type="PDB" id="5BW8">
    <property type="method" value="X-ray"/>
    <property type="resolution" value="2.80 A"/>
    <property type="chains" value="C=1-290"/>
</dbReference>
<dbReference type="PDB" id="5BWK">
    <property type="method" value="X-ray"/>
    <property type="resolution" value="6.00 A"/>
    <property type="chains" value="E/G/I/K/Q/S/U/W=11-311"/>
</dbReference>
<dbReference type="PDBsum" id="2WPV"/>
<dbReference type="PDBsum" id="3LKU"/>
<dbReference type="PDBsum" id="4PWX"/>
<dbReference type="PDBsum" id="5BW8"/>
<dbReference type="PDBsum" id="5BWK"/>
<dbReference type="SMR" id="Q12125"/>
<dbReference type="BioGRID" id="34560">
    <property type="interactions" value="277"/>
</dbReference>
<dbReference type="ComplexPortal" id="CPX-1861">
    <property type="entry name" value="GET4-GET5 transmembrane domain recognition complex"/>
</dbReference>
<dbReference type="DIP" id="DIP-2005N"/>
<dbReference type="FunCoup" id="Q12125">
    <property type="interactions" value="431"/>
</dbReference>
<dbReference type="IntAct" id="Q12125">
    <property type="interactions" value="14"/>
</dbReference>
<dbReference type="MINT" id="Q12125"/>
<dbReference type="STRING" id="4932.YOR164C"/>
<dbReference type="TCDB" id="3.A.21.1.1">
    <property type="family name" value="the c-terminal tail-anchored membrane protein biogenesis/ insertion complex (tamp-b) family"/>
</dbReference>
<dbReference type="iPTMnet" id="Q12125"/>
<dbReference type="PaxDb" id="4932-YOR164C"/>
<dbReference type="PeptideAtlas" id="Q12125"/>
<dbReference type="EnsemblFungi" id="YOR164C_mRNA">
    <property type="protein sequence ID" value="YOR164C"/>
    <property type="gene ID" value="YOR164C"/>
</dbReference>
<dbReference type="GeneID" id="854335"/>
<dbReference type="KEGG" id="sce:YOR164C"/>
<dbReference type="AGR" id="SGD:S000005690"/>
<dbReference type="SGD" id="S000005690">
    <property type="gene designation" value="GET4"/>
</dbReference>
<dbReference type="VEuPathDB" id="FungiDB:YOR164C"/>
<dbReference type="eggNOG" id="KOG3024">
    <property type="taxonomic scope" value="Eukaryota"/>
</dbReference>
<dbReference type="GeneTree" id="ENSGT00390000015750"/>
<dbReference type="HOGENOM" id="CLU_046061_0_2_1"/>
<dbReference type="InParanoid" id="Q12125"/>
<dbReference type="OMA" id="LMDMMGM"/>
<dbReference type="OrthoDB" id="10252405at2759"/>
<dbReference type="BioCyc" id="YEAST:G3O-33680-MONOMER"/>
<dbReference type="BioGRID-ORCS" id="854335">
    <property type="hits" value="0 hits in 10 CRISPR screens"/>
</dbReference>
<dbReference type="EvolutionaryTrace" id="Q12125"/>
<dbReference type="PRO" id="PR:Q12125"/>
<dbReference type="Proteomes" id="UP000002311">
    <property type="component" value="Chromosome XV"/>
</dbReference>
<dbReference type="RNAct" id="Q12125">
    <property type="molecule type" value="protein"/>
</dbReference>
<dbReference type="GO" id="GO:0005737">
    <property type="term" value="C:cytoplasm"/>
    <property type="evidence" value="ECO:0007005"/>
    <property type="project" value="SGD"/>
</dbReference>
<dbReference type="GO" id="GO:0005829">
    <property type="term" value="C:cytosol"/>
    <property type="evidence" value="ECO:0000318"/>
    <property type="project" value="GO_Central"/>
</dbReference>
<dbReference type="GO" id="GO:0072380">
    <property type="term" value="C:TRC complex"/>
    <property type="evidence" value="ECO:0000314"/>
    <property type="project" value="SGD"/>
</dbReference>
<dbReference type="GO" id="GO:0006620">
    <property type="term" value="P:post-translational protein targeting to endoplasmic reticulum membrane"/>
    <property type="evidence" value="ECO:0000314"/>
    <property type="project" value="SGD"/>
</dbReference>
<dbReference type="GO" id="GO:0045048">
    <property type="term" value="P:protein insertion into ER membrane"/>
    <property type="evidence" value="ECO:0007003"/>
    <property type="project" value="SGD"/>
</dbReference>
<dbReference type="GO" id="GO:0016192">
    <property type="term" value="P:vesicle-mediated transport"/>
    <property type="evidence" value="ECO:0007669"/>
    <property type="project" value="UniProtKB-KW"/>
</dbReference>
<dbReference type="FunFam" id="1.25.40.10:FF:000615">
    <property type="entry name" value="Golgi to ER traffic protein 4"/>
    <property type="match status" value="1"/>
</dbReference>
<dbReference type="Gene3D" id="1.25.40.10">
    <property type="entry name" value="Tetratricopeptide repeat domain"/>
    <property type="match status" value="1"/>
</dbReference>
<dbReference type="InterPro" id="IPR007317">
    <property type="entry name" value="GET4"/>
</dbReference>
<dbReference type="InterPro" id="IPR011990">
    <property type="entry name" value="TPR-like_helical_dom_sf"/>
</dbReference>
<dbReference type="PANTHER" id="PTHR12875">
    <property type="entry name" value="GOLGI TO ER TRAFFIC PROTEIN 4 HOMOLOG"/>
    <property type="match status" value="1"/>
</dbReference>
<dbReference type="PANTHER" id="PTHR12875:SF0">
    <property type="entry name" value="GOLGI TO ER TRAFFIC PROTEIN 4 HOMOLOG"/>
    <property type="match status" value="1"/>
</dbReference>
<dbReference type="Pfam" id="PF04190">
    <property type="entry name" value="GET4"/>
    <property type="match status" value="1"/>
</dbReference>